<accession>O86535</accession>
<protein>
    <recommendedName>
        <fullName>3-isopropylmalate dehydratase small subunit</fullName>
        <ecNumber>4.2.1.33</ecNumber>
    </recommendedName>
    <alternativeName>
        <fullName>Alpha-IPM isomerase</fullName>
        <shortName>IPMI</shortName>
    </alternativeName>
    <alternativeName>
        <fullName>Isopropylmalate isomerase</fullName>
    </alternativeName>
</protein>
<keyword id="KW-0028">Amino-acid biosynthesis</keyword>
<keyword id="KW-0100">Branched-chain amino acid biosynthesis</keyword>
<keyword id="KW-0432">Leucine biosynthesis</keyword>
<keyword id="KW-0456">Lyase</keyword>
<keyword id="KW-1185">Reference proteome</keyword>
<sequence length="197" mass="22213">MEAFTKHTGRAVPLRRSNVDTDQIIPAHWLKKVTRDGFEDGLFEAWRKDPEFVLNRPEREGATVLVAGPDFGTGSSREHAVWALQNYGFKTVVSSRFADIFRGNSLKNGLLTVVLDQKTVDALWELVERDPQAEITVDLEAREVRAEGVTASFELDENSRWRLLNGLDDISITLQNEADIAAYEAKRPSFKPQTVQV</sequence>
<gene>
    <name type="primary">leuD</name>
    <name type="ordered locus">SCO5554</name>
    <name type="ORF">SC1C2.35</name>
</gene>
<name>LEUD_STRCO</name>
<dbReference type="EC" id="4.2.1.33"/>
<dbReference type="EMBL" id="AL939124">
    <property type="protein sequence ID" value="CAA20002.1"/>
    <property type="molecule type" value="Genomic_DNA"/>
</dbReference>
<dbReference type="PIR" id="T29084">
    <property type="entry name" value="T29084"/>
</dbReference>
<dbReference type="RefSeq" id="NP_629688.1">
    <property type="nucleotide sequence ID" value="NC_003888.3"/>
</dbReference>
<dbReference type="RefSeq" id="WP_011030306.1">
    <property type="nucleotide sequence ID" value="NZ_VNID01000011.1"/>
</dbReference>
<dbReference type="SMR" id="O86535"/>
<dbReference type="FunCoup" id="O86535">
    <property type="interactions" value="141"/>
</dbReference>
<dbReference type="STRING" id="100226.gene:17763211"/>
<dbReference type="PaxDb" id="100226-SCO5554"/>
<dbReference type="KEGG" id="sco:SCO5554"/>
<dbReference type="PATRIC" id="fig|100226.15.peg.5642"/>
<dbReference type="eggNOG" id="COG0066">
    <property type="taxonomic scope" value="Bacteria"/>
</dbReference>
<dbReference type="HOGENOM" id="CLU_081378_0_1_11"/>
<dbReference type="InParanoid" id="O86535"/>
<dbReference type="OrthoDB" id="9777465at2"/>
<dbReference type="PhylomeDB" id="O86535"/>
<dbReference type="UniPathway" id="UPA00048">
    <property type="reaction ID" value="UER00071"/>
</dbReference>
<dbReference type="Proteomes" id="UP000001973">
    <property type="component" value="Chromosome"/>
</dbReference>
<dbReference type="GO" id="GO:0009316">
    <property type="term" value="C:3-isopropylmalate dehydratase complex"/>
    <property type="evidence" value="ECO:0007669"/>
    <property type="project" value="InterPro"/>
</dbReference>
<dbReference type="GO" id="GO:0003861">
    <property type="term" value="F:3-isopropylmalate dehydratase activity"/>
    <property type="evidence" value="ECO:0007669"/>
    <property type="project" value="UniProtKB-UniRule"/>
</dbReference>
<dbReference type="GO" id="GO:0009098">
    <property type="term" value="P:L-leucine biosynthetic process"/>
    <property type="evidence" value="ECO:0007669"/>
    <property type="project" value="UniProtKB-UniRule"/>
</dbReference>
<dbReference type="CDD" id="cd01577">
    <property type="entry name" value="IPMI_Swivel"/>
    <property type="match status" value="1"/>
</dbReference>
<dbReference type="FunFam" id="3.20.19.10:FF:000003">
    <property type="entry name" value="3-isopropylmalate dehydratase small subunit"/>
    <property type="match status" value="1"/>
</dbReference>
<dbReference type="Gene3D" id="3.20.19.10">
    <property type="entry name" value="Aconitase, domain 4"/>
    <property type="match status" value="1"/>
</dbReference>
<dbReference type="HAMAP" id="MF_01031">
    <property type="entry name" value="LeuD_type1"/>
    <property type="match status" value="1"/>
</dbReference>
<dbReference type="InterPro" id="IPR004431">
    <property type="entry name" value="3-IsopropMal_deHydase_ssu"/>
</dbReference>
<dbReference type="InterPro" id="IPR015928">
    <property type="entry name" value="Aconitase/3IPM_dehydase_swvl"/>
</dbReference>
<dbReference type="InterPro" id="IPR000573">
    <property type="entry name" value="AconitaseA/IPMdHydase_ssu_swvl"/>
</dbReference>
<dbReference type="InterPro" id="IPR033940">
    <property type="entry name" value="IPMI_Swivel"/>
</dbReference>
<dbReference type="InterPro" id="IPR050075">
    <property type="entry name" value="LeuD"/>
</dbReference>
<dbReference type="NCBIfam" id="TIGR00171">
    <property type="entry name" value="leuD"/>
    <property type="match status" value="1"/>
</dbReference>
<dbReference type="NCBIfam" id="NF002458">
    <property type="entry name" value="PRK01641.1"/>
    <property type="match status" value="1"/>
</dbReference>
<dbReference type="PANTHER" id="PTHR43345:SF5">
    <property type="entry name" value="3-ISOPROPYLMALATE DEHYDRATASE SMALL SUBUNIT"/>
    <property type="match status" value="1"/>
</dbReference>
<dbReference type="PANTHER" id="PTHR43345">
    <property type="entry name" value="3-ISOPROPYLMALATE DEHYDRATASE SMALL SUBUNIT 2-RELATED-RELATED"/>
    <property type="match status" value="1"/>
</dbReference>
<dbReference type="Pfam" id="PF00694">
    <property type="entry name" value="Aconitase_C"/>
    <property type="match status" value="1"/>
</dbReference>
<dbReference type="SUPFAM" id="SSF52016">
    <property type="entry name" value="LeuD/IlvD-like"/>
    <property type="match status" value="1"/>
</dbReference>
<proteinExistence type="inferred from homology"/>
<comment type="function">
    <text evidence="1">Catalyzes the isomerization between 2-isopropylmalate and 3-isopropylmalate, via the formation of 2-isopropylmaleate.</text>
</comment>
<comment type="catalytic activity">
    <reaction>
        <text>(2R,3S)-3-isopropylmalate = (2S)-2-isopropylmalate</text>
        <dbReference type="Rhea" id="RHEA:32287"/>
        <dbReference type="ChEBI" id="CHEBI:1178"/>
        <dbReference type="ChEBI" id="CHEBI:35121"/>
        <dbReference type="EC" id="4.2.1.33"/>
    </reaction>
</comment>
<comment type="pathway">
    <text>Amino-acid biosynthesis; L-leucine biosynthesis; L-leucine from 3-methyl-2-oxobutanoate: step 2/4.</text>
</comment>
<comment type="subunit">
    <text evidence="1">Heterodimer of LeuC and LeuD.</text>
</comment>
<comment type="similarity">
    <text evidence="2">Belongs to the LeuD family. LeuD type 1 subfamily.</text>
</comment>
<organism>
    <name type="scientific">Streptomyces coelicolor (strain ATCC BAA-471 / A3(2) / M145)</name>
    <dbReference type="NCBI Taxonomy" id="100226"/>
    <lineage>
        <taxon>Bacteria</taxon>
        <taxon>Bacillati</taxon>
        <taxon>Actinomycetota</taxon>
        <taxon>Actinomycetes</taxon>
        <taxon>Kitasatosporales</taxon>
        <taxon>Streptomycetaceae</taxon>
        <taxon>Streptomyces</taxon>
        <taxon>Streptomyces albidoflavus group</taxon>
    </lineage>
</organism>
<evidence type="ECO:0000250" key="1"/>
<evidence type="ECO:0000305" key="2"/>
<feature type="chain" id="PRO_0000141898" description="3-isopropylmalate dehydratase small subunit">
    <location>
        <begin position="1"/>
        <end position="197"/>
    </location>
</feature>
<reference key="1">
    <citation type="journal article" date="2002" name="Nature">
        <title>Complete genome sequence of the model actinomycete Streptomyces coelicolor A3(2).</title>
        <authorList>
            <person name="Bentley S.D."/>
            <person name="Chater K.F."/>
            <person name="Cerdeno-Tarraga A.-M."/>
            <person name="Challis G.L."/>
            <person name="Thomson N.R."/>
            <person name="James K.D."/>
            <person name="Harris D.E."/>
            <person name="Quail M.A."/>
            <person name="Kieser H."/>
            <person name="Harper D."/>
            <person name="Bateman A."/>
            <person name="Brown S."/>
            <person name="Chandra G."/>
            <person name="Chen C.W."/>
            <person name="Collins M."/>
            <person name="Cronin A."/>
            <person name="Fraser A."/>
            <person name="Goble A."/>
            <person name="Hidalgo J."/>
            <person name="Hornsby T."/>
            <person name="Howarth S."/>
            <person name="Huang C.-H."/>
            <person name="Kieser T."/>
            <person name="Larke L."/>
            <person name="Murphy L.D."/>
            <person name="Oliver K."/>
            <person name="O'Neil S."/>
            <person name="Rabbinowitsch E."/>
            <person name="Rajandream M.A."/>
            <person name="Rutherford K.M."/>
            <person name="Rutter S."/>
            <person name="Seeger K."/>
            <person name="Saunders D."/>
            <person name="Sharp S."/>
            <person name="Squares R."/>
            <person name="Squares S."/>
            <person name="Taylor K."/>
            <person name="Warren T."/>
            <person name="Wietzorrek A."/>
            <person name="Woodward J.R."/>
            <person name="Barrell B.G."/>
            <person name="Parkhill J."/>
            <person name="Hopwood D.A."/>
        </authorList>
    </citation>
    <scope>NUCLEOTIDE SEQUENCE [LARGE SCALE GENOMIC DNA]</scope>
    <source>
        <strain>ATCC BAA-471 / A3(2) / M145</strain>
    </source>
</reference>